<reference key="1">
    <citation type="journal article" date="1998" name="DNA Cell Biol.">
        <title>Mouse cytochrome b561: cDNA cloning and expression in rat brain, mouse embryos, and human glioma cell lines.</title>
        <authorList>
            <person name="Srivastava M."/>
            <person name="Pollard H.B."/>
            <person name="Fleming P.J."/>
        </authorList>
    </citation>
    <scope>NUCLEOTIDE SEQUENCE [MRNA]</scope>
    <source>
        <tissue>Brain</tissue>
    </source>
</reference>
<reference key="2">
    <citation type="journal article" date="2005" name="Science">
        <title>The transcriptional landscape of the mammalian genome.</title>
        <authorList>
            <person name="Carninci P."/>
            <person name="Kasukawa T."/>
            <person name="Katayama S."/>
            <person name="Gough J."/>
            <person name="Frith M.C."/>
            <person name="Maeda N."/>
            <person name="Oyama R."/>
            <person name="Ravasi T."/>
            <person name="Lenhard B."/>
            <person name="Wells C."/>
            <person name="Kodzius R."/>
            <person name="Shimokawa K."/>
            <person name="Bajic V.B."/>
            <person name="Brenner S.E."/>
            <person name="Batalov S."/>
            <person name="Forrest A.R."/>
            <person name="Zavolan M."/>
            <person name="Davis M.J."/>
            <person name="Wilming L.G."/>
            <person name="Aidinis V."/>
            <person name="Allen J.E."/>
            <person name="Ambesi-Impiombato A."/>
            <person name="Apweiler R."/>
            <person name="Aturaliya R.N."/>
            <person name="Bailey T.L."/>
            <person name="Bansal M."/>
            <person name="Baxter L."/>
            <person name="Beisel K.W."/>
            <person name="Bersano T."/>
            <person name="Bono H."/>
            <person name="Chalk A.M."/>
            <person name="Chiu K.P."/>
            <person name="Choudhary V."/>
            <person name="Christoffels A."/>
            <person name="Clutterbuck D.R."/>
            <person name="Crowe M.L."/>
            <person name="Dalla E."/>
            <person name="Dalrymple B.P."/>
            <person name="de Bono B."/>
            <person name="Della Gatta G."/>
            <person name="di Bernardo D."/>
            <person name="Down T."/>
            <person name="Engstrom P."/>
            <person name="Fagiolini M."/>
            <person name="Faulkner G."/>
            <person name="Fletcher C.F."/>
            <person name="Fukushima T."/>
            <person name="Furuno M."/>
            <person name="Futaki S."/>
            <person name="Gariboldi M."/>
            <person name="Georgii-Hemming P."/>
            <person name="Gingeras T.R."/>
            <person name="Gojobori T."/>
            <person name="Green R.E."/>
            <person name="Gustincich S."/>
            <person name="Harbers M."/>
            <person name="Hayashi Y."/>
            <person name="Hensch T.K."/>
            <person name="Hirokawa N."/>
            <person name="Hill D."/>
            <person name="Huminiecki L."/>
            <person name="Iacono M."/>
            <person name="Ikeo K."/>
            <person name="Iwama A."/>
            <person name="Ishikawa T."/>
            <person name="Jakt M."/>
            <person name="Kanapin A."/>
            <person name="Katoh M."/>
            <person name="Kawasawa Y."/>
            <person name="Kelso J."/>
            <person name="Kitamura H."/>
            <person name="Kitano H."/>
            <person name="Kollias G."/>
            <person name="Krishnan S.P."/>
            <person name="Kruger A."/>
            <person name="Kummerfeld S.K."/>
            <person name="Kurochkin I.V."/>
            <person name="Lareau L.F."/>
            <person name="Lazarevic D."/>
            <person name="Lipovich L."/>
            <person name="Liu J."/>
            <person name="Liuni S."/>
            <person name="McWilliam S."/>
            <person name="Madan Babu M."/>
            <person name="Madera M."/>
            <person name="Marchionni L."/>
            <person name="Matsuda H."/>
            <person name="Matsuzawa S."/>
            <person name="Miki H."/>
            <person name="Mignone F."/>
            <person name="Miyake S."/>
            <person name="Morris K."/>
            <person name="Mottagui-Tabar S."/>
            <person name="Mulder N."/>
            <person name="Nakano N."/>
            <person name="Nakauchi H."/>
            <person name="Ng P."/>
            <person name="Nilsson R."/>
            <person name="Nishiguchi S."/>
            <person name="Nishikawa S."/>
            <person name="Nori F."/>
            <person name="Ohara O."/>
            <person name="Okazaki Y."/>
            <person name="Orlando V."/>
            <person name="Pang K.C."/>
            <person name="Pavan W.J."/>
            <person name="Pavesi G."/>
            <person name="Pesole G."/>
            <person name="Petrovsky N."/>
            <person name="Piazza S."/>
            <person name="Reed J."/>
            <person name="Reid J.F."/>
            <person name="Ring B.Z."/>
            <person name="Ringwald M."/>
            <person name="Rost B."/>
            <person name="Ruan Y."/>
            <person name="Salzberg S.L."/>
            <person name="Sandelin A."/>
            <person name="Schneider C."/>
            <person name="Schoenbach C."/>
            <person name="Sekiguchi K."/>
            <person name="Semple C.A."/>
            <person name="Seno S."/>
            <person name="Sessa L."/>
            <person name="Sheng Y."/>
            <person name="Shibata Y."/>
            <person name="Shimada H."/>
            <person name="Shimada K."/>
            <person name="Silva D."/>
            <person name="Sinclair B."/>
            <person name="Sperling S."/>
            <person name="Stupka E."/>
            <person name="Sugiura K."/>
            <person name="Sultana R."/>
            <person name="Takenaka Y."/>
            <person name="Taki K."/>
            <person name="Tammoja K."/>
            <person name="Tan S.L."/>
            <person name="Tang S."/>
            <person name="Taylor M.S."/>
            <person name="Tegner J."/>
            <person name="Teichmann S.A."/>
            <person name="Ueda H.R."/>
            <person name="van Nimwegen E."/>
            <person name="Verardo R."/>
            <person name="Wei C.L."/>
            <person name="Yagi K."/>
            <person name="Yamanishi H."/>
            <person name="Zabarovsky E."/>
            <person name="Zhu S."/>
            <person name="Zimmer A."/>
            <person name="Hide W."/>
            <person name="Bult C."/>
            <person name="Grimmond S.M."/>
            <person name="Teasdale R.D."/>
            <person name="Liu E.T."/>
            <person name="Brusic V."/>
            <person name="Quackenbush J."/>
            <person name="Wahlestedt C."/>
            <person name="Mattick J.S."/>
            <person name="Hume D.A."/>
            <person name="Kai C."/>
            <person name="Sasaki D."/>
            <person name="Tomaru Y."/>
            <person name="Fukuda S."/>
            <person name="Kanamori-Katayama M."/>
            <person name="Suzuki M."/>
            <person name="Aoki J."/>
            <person name="Arakawa T."/>
            <person name="Iida J."/>
            <person name="Imamura K."/>
            <person name="Itoh M."/>
            <person name="Kato T."/>
            <person name="Kawaji H."/>
            <person name="Kawagashira N."/>
            <person name="Kawashima T."/>
            <person name="Kojima M."/>
            <person name="Kondo S."/>
            <person name="Konno H."/>
            <person name="Nakano K."/>
            <person name="Ninomiya N."/>
            <person name="Nishio T."/>
            <person name="Okada M."/>
            <person name="Plessy C."/>
            <person name="Shibata K."/>
            <person name="Shiraki T."/>
            <person name="Suzuki S."/>
            <person name="Tagami M."/>
            <person name="Waki K."/>
            <person name="Watahiki A."/>
            <person name="Okamura-Oho Y."/>
            <person name="Suzuki H."/>
            <person name="Kawai J."/>
            <person name="Hayashizaki Y."/>
        </authorList>
    </citation>
    <scope>NUCLEOTIDE SEQUENCE [LARGE SCALE MRNA]</scope>
    <source>
        <strain>C57BL/6J</strain>
        <tissue>Brain</tissue>
        <tissue>Visual cortex</tissue>
    </source>
</reference>
<reference key="3">
    <citation type="journal article" date="2004" name="Genome Res.">
        <title>The status, quality, and expansion of the NIH full-length cDNA project: the Mammalian Gene Collection (MGC).</title>
        <authorList>
            <consortium name="The MGC Project Team"/>
        </authorList>
    </citation>
    <scope>NUCLEOTIDE SEQUENCE [LARGE SCALE MRNA]</scope>
</reference>
<reference key="4">
    <citation type="journal article" date="2005" name="Arch. Biochem. Biophys.">
        <title>Heterologous expression and site-directed mutagenesis of an ascorbate-reducible cytochrome b561.</title>
        <authorList>
            <person name="Berczi A."/>
            <person name="Su D."/>
            <person name="Lakshminarasimhan M."/>
            <person name="Vargas A."/>
            <person name="Asard H."/>
        </authorList>
    </citation>
    <scope>FUNCTION</scope>
    <scope>CATALYTIC ACTIVITY</scope>
    <scope>COFACTOR</scope>
    <scope>SUBCELLULAR LOCATION</scope>
    <scope>MUTAGENESIS OF HIS-52; ARG-72; LYS-83; HIS-86; HIS-108; HIS-120 AND HIS-159</scope>
</reference>
<reference key="5">
    <citation type="journal article" date="2010" name="Cell">
        <title>A tissue-specific atlas of mouse protein phosphorylation and expression.</title>
        <authorList>
            <person name="Huttlin E.L."/>
            <person name="Jedrychowski M.P."/>
            <person name="Elias J.E."/>
            <person name="Goswami T."/>
            <person name="Rad R."/>
            <person name="Beausoleil S.A."/>
            <person name="Villen J."/>
            <person name="Haas W."/>
            <person name="Sowa M.E."/>
            <person name="Gygi S.P."/>
        </authorList>
    </citation>
    <scope>PHOSPHORYLATION [LARGE SCALE ANALYSIS] AT SER-246 AND SER-248</scope>
    <scope>IDENTIFICATION BY MASS SPECTROMETRY [LARGE SCALE ANALYSIS]</scope>
    <source>
        <tissue>Brain</tissue>
        <tissue>Brown adipose tissue</tissue>
    </source>
</reference>
<reference key="6">
    <citation type="journal article" date="2018" name="Circ. Res.">
        <title>Mutations in CYB561 causing a novel orthostatic hypotension syndrome.</title>
        <authorList>
            <person name="van den Berg M.P."/>
            <person name="Almomani R."/>
            <person name="Biaggioni I."/>
            <person name="van Faassen M."/>
            <person name="van der Harst P."/>
            <person name="Sillje H.H.W."/>
            <person name="Mateo Leach I."/>
            <person name="Hemmelder M.H."/>
            <person name="Navis G."/>
            <person name="Luijckx G.J."/>
            <person name="de Brouwer A.P.M."/>
            <person name="Venselaar H."/>
            <person name="Verbeek M.M."/>
            <person name="van der Zwaag P.A."/>
            <person name="Jongbloed J.D.H."/>
            <person name="van Tintelen J.P."/>
            <person name="Wevers R.A."/>
            <person name="Kema I.P."/>
        </authorList>
    </citation>
    <scope>DISRUPTION PHENOTYPE</scope>
</reference>
<feature type="chain" id="PRO_0000151028" description="Transmembrane ascorbate-dependent reductase CYB561">
    <location>
        <begin position="1"/>
        <end position="250"/>
    </location>
</feature>
<feature type="topological domain" description="Cytoplasmic" evidence="2">
    <location>
        <begin position="1"/>
        <end position="15"/>
    </location>
</feature>
<feature type="transmembrane region" description="Helical" evidence="3">
    <location>
        <begin position="16"/>
        <end position="36"/>
    </location>
</feature>
<feature type="topological domain" description="Vesicular" evidence="2">
    <location>
        <begin position="37"/>
        <end position="50"/>
    </location>
</feature>
<feature type="transmembrane region" description="Helical" evidence="3">
    <location>
        <begin position="51"/>
        <end position="71"/>
    </location>
</feature>
<feature type="topological domain" description="Cytoplasmic" evidence="2">
    <location>
        <begin position="72"/>
        <end position="83"/>
    </location>
</feature>
<feature type="transmembrane region" description="Helical" evidence="3">
    <location>
        <begin position="84"/>
        <end position="104"/>
    </location>
</feature>
<feature type="topological domain" description="Vesicular" evidence="2">
    <location>
        <begin position="105"/>
        <end position="123"/>
    </location>
</feature>
<feature type="transmembrane region" description="Helical" evidence="3">
    <location>
        <begin position="124"/>
        <end position="144"/>
    </location>
</feature>
<feature type="topological domain" description="Cytoplasmic" evidence="2">
    <location>
        <begin position="145"/>
        <end position="157"/>
    </location>
</feature>
<feature type="transmembrane region" description="Helical" evidence="3">
    <location>
        <begin position="158"/>
        <end position="178"/>
    </location>
</feature>
<feature type="topological domain" description="Vesicular" evidence="2">
    <location>
        <begin position="179"/>
        <end position="197"/>
    </location>
</feature>
<feature type="transmembrane region" description="Helical" evidence="3">
    <location>
        <begin position="198"/>
        <end position="218"/>
    </location>
</feature>
<feature type="topological domain" description="Cytoplasmic" evidence="2">
    <location>
        <begin position="219"/>
        <end position="250"/>
    </location>
</feature>
<feature type="domain" description="Cytochrome b561" evidence="4">
    <location>
        <begin position="18"/>
        <end position="219"/>
    </location>
</feature>
<feature type="binding site" description="axial binding residue" evidence="2">
    <location>
        <position position="52"/>
    </location>
    <ligand>
        <name>heme b</name>
        <dbReference type="ChEBI" id="CHEBI:60344"/>
        <label>1</label>
    </ligand>
    <ligandPart>
        <name>Fe</name>
        <dbReference type="ChEBI" id="CHEBI:18248"/>
    </ligandPart>
</feature>
<feature type="binding site" evidence="2">
    <location>
        <position position="72"/>
    </location>
    <ligand>
        <name>heme b</name>
        <dbReference type="ChEBI" id="CHEBI:60344"/>
        <label>2</label>
    </ligand>
</feature>
<feature type="binding site" evidence="2">
    <location>
        <position position="79"/>
    </location>
    <ligand>
        <name>heme b</name>
        <dbReference type="ChEBI" id="CHEBI:60344"/>
        <label>2</label>
    </ligand>
</feature>
<feature type="binding site" evidence="2">
    <location>
        <position position="79"/>
    </location>
    <ligand>
        <name>L-ascorbate</name>
        <dbReference type="ChEBI" id="CHEBI:38290"/>
    </ligand>
</feature>
<feature type="binding site" evidence="2">
    <location>
        <position position="83"/>
    </location>
    <ligand>
        <name>L-ascorbate</name>
        <dbReference type="ChEBI" id="CHEBI:38290"/>
    </ligand>
</feature>
<feature type="binding site" description="axial binding residue" evidence="2">
    <location>
        <position position="86"/>
    </location>
    <ligand>
        <name>heme b</name>
        <dbReference type="ChEBI" id="CHEBI:60344"/>
        <label>2</label>
    </ligand>
    <ligandPart>
        <name>Fe</name>
        <dbReference type="ChEBI" id="CHEBI:18248"/>
    </ligandPart>
</feature>
<feature type="binding site" evidence="2">
    <location>
        <begin position="115"/>
        <end position="118"/>
    </location>
    <ligand>
        <name>heme b</name>
        <dbReference type="ChEBI" id="CHEBI:60344"/>
        <label>1</label>
    </ligand>
</feature>
<feature type="binding site" description="axial binding residue" evidence="2">
    <location>
        <position position="120"/>
    </location>
    <ligand>
        <name>heme b</name>
        <dbReference type="ChEBI" id="CHEBI:60344"/>
        <label>1</label>
    </ligand>
    <ligandPart>
        <name>Fe</name>
        <dbReference type="ChEBI" id="CHEBI:18248"/>
    </ligandPart>
</feature>
<feature type="binding site" evidence="2">
    <location>
        <position position="152"/>
    </location>
    <ligand>
        <name>L-ascorbate</name>
        <dbReference type="ChEBI" id="CHEBI:38290"/>
    </ligand>
</feature>
<feature type="binding site" description="axial binding residue" evidence="2">
    <location>
        <position position="159"/>
    </location>
    <ligand>
        <name>heme b</name>
        <dbReference type="ChEBI" id="CHEBI:60344"/>
        <label>2</label>
    </ligand>
    <ligandPart>
        <name>Fe</name>
        <dbReference type="ChEBI" id="CHEBI:18248"/>
    </ligandPart>
</feature>
<feature type="binding site" evidence="2">
    <location>
        <position position="180"/>
    </location>
    <ligand>
        <name>heme b</name>
        <dbReference type="ChEBI" id="CHEBI:60344"/>
        <label>1</label>
    </ligand>
</feature>
<feature type="binding site" evidence="2">
    <location>
        <position position="224"/>
    </location>
    <ligand>
        <name>heme b</name>
        <dbReference type="ChEBI" id="CHEBI:60344"/>
        <label>2</label>
    </ligand>
</feature>
<feature type="modified residue" description="N-acetylmethionine" evidence="1">
    <location>
        <position position="1"/>
    </location>
</feature>
<feature type="modified residue" description="Phosphoserine" evidence="12">
    <location>
        <position position="246"/>
    </location>
</feature>
<feature type="modified residue" description="Phosphoserine" evidence="12">
    <location>
        <position position="248"/>
    </location>
</feature>
<feature type="mutagenesis site" description="Decreased protein abundance." evidence="5">
    <original>H</original>
    <variation>A</variation>
    <location>
        <position position="52"/>
    </location>
</feature>
<feature type="mutagenesis site" description="No effect on protein abundance. Decreased reduction by ascorbate." evidence="5">
    <original>R</original>
    <variation>A</variation>
    <location>
        <position position="72"/>
    </location>
</feature>
<feature type="mutagenesis site" description="No effect on protein abundance." evidence="5">
    <original>K</original>
    <variation>A</variation>
    <location>
        <position position="83"/>
    </location>
</feature>
<feature type="mutagenesis site" description="No effect on protein abundance. Decreased reduction by ascorbate; when associated with A-159." evidence="5">
    <original>H</original>
    <variation>A</variation>
    <location>
        <position position="86"/>
    </location>
</feature>
<feature type="mutagenesis site" description="No effect on protein abundance." evidence="5">
    <original>H</original>
    <variation>A</variation>
    <location>
        <position position="108"/>
    </location>
</feature>
<feature type="mutagenesis site" description="Decreased protein abundance." evidence="5">
    <original>H</original>
    <variation>A</variation>
    <location>
        <position position="120"/>
    </location>
</feature>
<feature type="mutagenesis site" description="No effect on protein abundance. Decreased reduction by ascorbate; when associated with A-86." evidence="5">
    <original>H</original>
    <variation>A</variation>
    <location>
        <position position="159"/>
    </location>
</feature>
<feature type="sequence conflict" description="In Ref. 1; AAA65643." evidence="9" ref="1">
    <original>PAALPYYVAFSQL</original>
    <variation>LLHCRTMWPSPSC</variation>
    <location>
        <begin position="9"/>
        <end position="21"/>
    </location>
</feature>
<feature type="sequence conflict" description="In Ref. 1; AAA65643." evidence="9" ref="1">
    <original>VGTA</original>
    <variation>AGHS</variation>
    <location>
        <begin position="171"/>
        <end position="174"/>
    </location>
</feature>
<feature type="sequence conflict" description="In Ref. 1; AAA65643." evidence="9" ref="1">
    <original>L</original>
    <variation>V</variation>
    <location>
        <position position="199"/>
    </location>
</feature>
<feature type="sequence conflict" description="In Ref. 1; AAA65643." evidence="9" ref="1">
    <original>DWKRP</original>
    <variation>ALERG</variation>
    <location>
        <begin position="222"/>
        <end position="226"/>
    </location>
</feature>
<feature type="sequence conflict" description="In Ref. 1; AAA65643." evidence="9" ref="1">
    <original>SP</original>
    <variation>TS</variation>
    <location>
        <begin position="248"/>
        <end position="249"/>
    </location>
</feature>
<gene>
    <name evidence="11" type="primary">Cyb561</name>
    <name type="synonym">Mcyt</name>
</gene>
<comment type="function">
    <text evidence="1 10">Transmembrane reductase that uses ascorbate as an electron donor in the cytoplasm and transfers electrons across membranes to reduce monodehydro-L-ascorbate radical in the lumen of secretory vesicles (Probable). It is therefore involved the regeneration and homeostasis within secretory vesicles of ascorbate which in turn provides reducing equivalents needed to support the activity of intravesicular enzymes (By similarity).</text>
</comment>
<comment type="catalytic activity">
    <reaction evidence="10">
        <text>monodehydro-L-ascorbate radical(out) + L-ascorbate(in) = monodehydro-L-ascorbate radical(in) + L-ascorbate(out)</text>
        <dbReference type="Rhea" id="RHEA:66524"/>
        <dbReference type="ChEBI" id="CHEBI:38290"/>
        <dbReference type="ChEBI" id="CHEBI:59513"/>
    </reaction>
    <physiologicalReaction direction="left-to-right" evidence="10">
        <dbReference type="Rhea" id="RHEA:66525"/>
    </physiologicalReaction>
</comment>
<comment type="cofactor">
    <cofactor evidence="10">
        <name>heme b</name>
        <dbReference type="ChEBI" id="CHEBI:60344"/>
    </cofactor>
    <text evidence="10">Binds 2 heme b groups non-covalently.</text>
</comment>
<comment type="subcellular location">
    <subcellularLocation>
        <location evidence="5">Cytoplasmic vesicle</location>
        <location evidence="5">Secretory vesicle</location>
        <location evidence="5">Chromaffin granule membrane</location>
        <topology evidence="2">Multi-pass membrane protein</topology>
    </subcellularLocation>
    <text evidence="1">Secretory vesicle containing catecholamines and amidated peptides.</text>
</comment>
<comment type="tissue specificity">
    <text evidence="7">Abundantly distributed in a number of neuroendocrine tissues.</text>
</comment>
<comment type="disruption phenotype">
    <text evidence="6">Mice lacking Cyb561 have significantly decreased amounts of norepinephrine and normetanephrine in the adrenal gland and brain while the biosynthesis of dopamine, the norepinephrine precursor, is normal pointing to a defect in the catecholamine biosynthesis downstream of dopamine probably at the level of the dopamine beta synthase.</text>
</comment>
<dbReference type="EC" id="7.2.1.-" evidence="10"/>
<dbReference type="EMBL" id="U16297">
    <property type="protein sequence ID" value="AAA65643.1"/>
    <property type="molecule type" value="mRNA"/>
</dbReference>
<dbReference type="EMBL" id="AK014395">
    <property type="protein sequence ID" value="BAB29321.1"/>
    <property type="molecule type" value="mRNA"/>
</dbReference>
<dbReference type="EMBL" id="AK158978">
    <property type="protein sequence ID" value="BAE34753.1"/>
    <property type="molecule type" value="mRNA"/>
</dbReference>
<dbReference type="EMBL" id="AK169711">
    <property type="protein sequence ID" value="BAE41322.1"/>
    <property type="molecule type" value="mRNA"/>
</dbReference>
<dbReference type="EMBL" id="BC006732">
    <property type="protein sequence ID" value="AAH06732.1"/>
    <property type="molecule type" value="mRNA"/>
</dbReference>
<dbReference type="CCDS" id="CCDS25542.1"/>
<dbReference type="RefSeq" id="NP_001343303.1">
    <property type="nucleotide sequence ID" value="NM_001356374.2"/>
</dbReference>
<dbReference type="RefSeq" id="NP_031831.2">
    <property type="nucleotide sequence ID" value="NM_007805.4"/>
</dbReference>
<dbReference type="RefSeq" id="XP_006532193.1">
    <property type="nucleotide sequence ID" value="XM_006532130.3"/>
</dbReference>
<dbReference type="RefSeq" id="XP_006532194.1">
    <property type="nucleotide sequence ID" value="XM_006532131.4"/>
</dbReference>
<dbReference type="RefSeq" id="XP_006532195.1">
    <property type="nucleotide sequence ID" value="XM_006532132.5"/>
</dbReference>
<dbReference type="SMR" id="Q60720"/>
<dbReference type="FunCoup" id="Q60720">
    <property type="interactions" value="147"/>
</dbReference>
<dbReference type="STRING" id="10090.ENSMUSP00000019734"/>
<dbReference type="iPTMnet" id="Q60720"/>
<dbReference type="PhosphoSitePlus" id="Q60720"/>
<dbReference type="PaxDb" id="10090-ENSMUSP00000019734"/>
<dbReference type="ProteomicsDB" id="284081"/>
<dbReference type="Antibodypedia" id="18653">
    <property type="antibodies" value="85 antibodies from 16 providers"/>
</dbReference>
<dbReference type="DNASU" id="13056"/>
<dbReference type="Ensembl" id="ENSMUST00000019734.11">
    <property type="protein sequence ID" value="ENSMUSP00000019734.5"/>
    <property type="gene ID" value="ENSMUSG00000019590.17"/>
</dbReference>
<dbReference type="GeneID" id="13056"/>
<dbReference type="KEGG" id="mmu:13056"/>
<dbReference type="UCSC" id="uc007lxr.1">
    <property type="organism name" value="mouse"/>
</dbReference>
<dbReference type="AGR" id="MGI:103253"/>
<dbReference type="CTD" id="1534"/>
<dbReference type="MGI" id="MGI:103253">
    <property type="gene designation" value="Cyb561"/>
</dbReference>
<dbReference type="VEuPathDB" id="HostDB:ENSMUSG00000019590"/>
<dbReference type="eggNOG" id="KOG1619">
    <property type="taxonomic scope" value="Eukaryota"/>
</dbReference>
<dbReference type="GeneTree" id="ENSGT00950000183197"/>
<dbReference type="HOGENOM" id="CLU_069712_1_1_1"/>
<dbReference type="InParanoid" id="Q60720"/>
<dbReference type="OMA" id="LHFRGGM"/>
<dbReference type="OrthoDB" id="907479at2759"/>
<dbReference type="PhylomeDB" id="Q60720"/>
<dbReference type="TreeFam" id="TF314222"/>
<dbReference type="BioGRID-ORCS" id="13056">
    <property type="hits" value="0 hits in 79 CRISPR screens"/>
</dbReference>
<dbReference type="ChiTaRS" id="Cyb561">
    <property type="organism name" value="mouse"/>
</dbReference>
<dbReference type="PRO" id="PR:Q60720"/>
<dbReference type="Proteomes" id="UP000000589">
    <property type="component" value="Chromosome 11"/>
</dbReference>
<dbReference type="RNAct" id="Q60720">
    <property type="molecule type" value="protein"/>
</dbReference>
<dbReference type="Bgee" id="ENSMUSG00000019590">
    <property type="expression patterns" value="Expressed in choroid plexus of fourth ventricle and 241 other cell types or tissues"/>
</dbReference>
<dbReference type="ExpressionAtlas" id="Q60720">
    <property type="expression patterns" value="baseline and differential"/>
</dbReference>
<dbReference type="GO" id="GO:0042584">
    <property type="term" value="C:chromaffin granule membrane"/>
    <property type="evidence" value="ECO:0000314"/>
    <property type="project" value="ARUK-UCL"/>
</dbReference>
<dbReference type="GO" id="GO:0046872">
    <property type="term" value="F:metal ion binding"/>
    <property type="evidence" value="ECO:0007669"/>
    <property type="project" value="UniProtKB-KW"/>
</dbReference>
<dbReference type="GO" id="GO:0140575">
    <property type="term" value="F:transmembrane monodehydroascorbate reductase activity"/>
    <property type="evidence" value="ECO:0000314"/>
    <property type="project" value="HGNC-UCL"/>
</dbReference>
<dbReference type="GO" id="GO:0140576">
    <property type="term" value="P:ascorbate homeostasis"/>
    <property type="evidence" value="ECO:0000314"/>
    <property type="project" value="ARUK-UCL"/>
</dbReference>
<dbReference type="GO" id="GO:0006879">
    <property type="term" value="P:intracellular iron ion homeostasis"/>
    <property type="evidence" value="ECO:0000314"/>
    <property type="project" value="ARUK-UCL"/>
</dbReference>
<dbReference type="FunFam" id="1.20.120.1770:FF:000001">
    <property type="entry name" value="Cytochrome b reductase 1"/>
    <property type="match status" value="1"/>
</dbReference>
<dbReference type="Gene3D" id="1.20.120.1770">
    <property type="match status" value="1"/>
</dbReference>
<dbReference type="InterPro" id="IPR043205">
    <property type="entry name" value="CYB561/CYBRD1-like"/>
</dbReference>
<dbReference type="InterPro" id="IPR006593">
    <property type="entry name" value="Cyt_b561/ferric_Rdtase_TM"/>
</dbReference>
<dbReference type="PANTHER" id="PTHR10106">
    <property type="entry name" value="CYTOCHROME B561-RELATED"/>
    <property type="match status" value="1"/>
</dbReference>
<dbReference type="PANTHER" id="PTHR10106:SF14">
    <property type="entry name" value="TRANSMEMBRANE ASCORBATE-DEPENDENT REDUCTASE CYB561"/>
    <property type="match status" value="1"/>
</dbReference>
<dbReference type="Pfam" id="PF03188">
    <property type="entry name" value="Cytochrom_B561"/>
    <property type="match status" value="1"/>
</dbReference>
<dbReference type="SMART" id="SM00665">
    <property type="entry name" value="B561"/>
    <property type="match status" value="1"/>
</dbReference>
<dbReference type="PROSITE" id="PS50939">
    <property type="entry name" value="CYTOCHROME_B561"/>
    <property type="match status" value="1"/>
</dbReference>
<sequence length="250" mass="27822">MEHSSASVPAALPYYVAFSQLLGLTVVAVTGAWLGLYRGGIAWESSLQFNVHPLCMVIGMIFLQGDALLVYRVFRREAKRTTKILHGLLHVFAFIIALVGLVAVFDYHKKKGYADLYSLHSWCGILVFVLYFVQWLVGFSFFLFPGASFSLRSRYRPQHIFFGATIFLFSVGTALLGLKEALLFKLGSKYSTFEPEGVLANVLGLLLVCFGVVVLYILAQADWKRPSQAEEQALSMDFKTLTEGDSPSPQ</sequence>
<keyword id="KW-0007">Acetylation</keyword>
<keyword id="KW-0968">Cytoplasmic vesicle</keyword>
<keyword id="KW-0249">Electron transport</keyword>
<keyword id="KW-0349">Heme</keyword>
<keyword id="KW-0408">Iron</keyword>
<keyword id="KW-0472">Membrane</keyword>
<keyword id="KW-0479">Metal-binding</keyword>
<keyword id="KW-0597">Phosphoprotein</keyword>
<keyword id="KW-1185">Reference proteome</keyword>
<keyword id="KW-1278">Translocase</keyword>
<keyword id="KW-0812">Transmembrane</keyword>
<keyword id="KW-1133">Transmembrane helix</keyword>
<keyword id="KW-0813">Transport</keyword>
<name>CY561_MOUSE</name>
<accession>Q60720</accession>
<accession>Q3TEC6</accession>
<accession>Q9D6C9</accession>
<organism>
    <name type="scientific">Mus musculus</name>
    <name type="common">Mouse</name>
    <dbReference type="NCBI Taxonomy" id="10090"/>
    <lineage>
        <taxon>Eukaryota</taxon>
        <taxon>Metazoa</taxon>
        <taxon>Chordata</taxon>
        <taxon>Craniata</taxon>
        <taxon>Vertebrata</taxon>
        <taxon>Euteleostomi</taxon>
        <taxon>Mammalia</taxon>
        <taxon>Eutheria</taxon>
        <taxon>Euarchontoglires</taxon>
        <taxon>Glires</taxon>
        <taxon>Rodentia</taxon>
        <taxon>Myomorpha</taxon>
        <taxon>Muroidea</taxon>
        <taxon>Muridae</taxon>
        <taxon>Murinae</taxon>
        <taxon>Mus</taxon>
        <taxon>Mus</taxon>
    </lineage>
</organism>
<proteinExistence type="evidence at protein level"/>
<evidence type="ECO:0000250" key="1">
    <source>
        <dbReference type="UniProtKB" id="P10897"/>
    </source>
</evidence>
<evidence type="ECO:0000250" key="2">
    <source>
        <dbReference type="UniProtKB" id="Q53TN4"/>
    </source>
</evidence>
<evidence type="ECO:0000255" key="3"/>
<evidence type="ECO:0000255" key="4">
    <source>
        <dbReference type="PROSITE-ProRule" id="PRU00242"/>
    </source>
</evidence>
<evidence type="ECO:0000269" key="5">
    <source>
    </source>
</evidence>
<evidence type="ECO:0000269" key="6">
    <source>
    </source>
</evidence>
<evidence type="ECO:0000269" key="7">
    <source>
    </source>
</evidence>
<evidence type="ECO:0000303" key="8">
    <source>
    </source>
</evidence>
<evidence type="ECO:0000305" key="9"/>
<evidence type="ECO:0000305" key="10">
    <source>
    </source>
</evidence>
<evidence type="ECO:0000312" key="11">
    <source>
        <dbReference type="MGI" id="MGI:103253"/>
    </source>
</evidence>
<evidence type="ECO:0007744" key="12">
    <source>
    </source>
</evidence>
<protein>
    <recommendedName>
        <fullName evidence="10">Transmembrane ascorbate-dependent reductase CYB561</fullName>
        <ecNumber evidence="10">7.2.1.-</ecNumber>
    </recommendedName>
    <alternativeName>
        <fullName evidence="8">Chromaffin granule Cyt b561</fullName>
        <shortName evidence="8">CGCytb</shortName>
    </alternativeName>
    <alternativeName>
        <fullName>Cytochrome b-561</fullName>
    </alternativeName>
    <alternativeName>
        <fullName>Cytochrome b561</fullName>
    </alternativeName>
</protein>